<reference key="1">
    <citation type="submission" date="2005-08" db="EMBL/GenBank/DDBJ databases">
        <title>Complete sequence of chromosome 1 of Synechococcus elongatus PCC 7942.</title>
        <authorList>
            <consortium name="US DOE Joint Genome Institute"/>
            <person name="Copeland A."/>
            <person name="Lucas S."/>
            <person name="Lapidus A."/>
            <person name="Barry K."/>
            <person name="Detter J.C."/>
            <person name="Glavina T."/>
            <person name="Hammon N."/>
            <person name="Israni S."/>
            <person name="Pitluck S."/>
            <person name="Schmutz J."/>
            <person name="Larimer F."/>
            <person name="Land M."/>
            <person name="Kyrpides N."/>
            <person name="Lykidis A."/>
            <person name="Golden S."/>
            <person name="Richardson P."/>
        </authorList>
    </citation>
    <scope>NUCLEOTIDE SEQUENCE [LARGE SCALE GENOMIC DNA]</scope>
    <source>
        <strain>ATCC 33912 / PCC 7942 / FACHB-805</strain>
    </source>
</reference>
<name>HIS5_SYNE7</name>
<dbReference type="EC" id="4.3.2.10" evidence="1"/>
<dbReference type="EC" id="3.5.1.2" evidence="1"/>
<dbReference type="EMBL" id="CP000100">
    <property type="protein sequence ID" value="ABB57511.1"/>
    <property type="molecule type" value="Genomic_DNA"/>
</dbReference>
<dbReference type="RefSeq" id="WP_011244777.1">
    <property type="nucleotide sequence ID" value="NZ_JACJTX010000004.1"/>
</dbReference>
<dbReference type="SMR" id="Q31N58"/>
<dbReference type="STRING" id="1140.Synpcc7942_1481"/>
<dbReference type="PaxDb" id="1140-Synpcc7942_1481"/>
<dbReference type="GeneID" id="72430486"/>
<dbReference type="KEGG" id="syf:Synpcc7942_1481"/>
<dbReference type="eggNOG" id="COG0118">
    <property type="taxonomic scope" value="Bacteria"/>
</dbReference>
<dbReference type="HOGENOM" id="CLU_071837_2_2_3"/>
<dbReference type="OrthoDB" id="9807137at2"/>
<dbReference type="BioCyc" id="SYNEL:SYNPCC7942_1481-MONOMER"/>
<dbReference type="UniPathway" id="UPA00031">
    <property type="reaction ID" value="UER00010"/>
</dbReference>
<dbReference type="Proteomes" id="UP000889800">
    <property type="component" value="Chromosome"/>
</dbReference>
<dbReference type="GO" id="GO:0005737">
    <property type="term" value="C:cytoplasm"/>
    <property type="evidence" value="ECO:0007669"/>
    <property type="project" value="UniProtKB-SubCell"/>
</dbReference>
<dbReference type="GO" id="GO:0004359">
    <property type="term" value="F:glutaminase activity"/>
    <property type="evidence" value="ECO:0007669"/>
    <property type="project" value="UniProtKB-EC"/>
</dbReference>
<dbReference type="GO" id="GO:0000107">
    <property type="term" value="F:imidazoleglycerol-phosphate synthase activity"/>
    <property type="evidence" value="ECO:0007669"/>
    <property type="project" value="UniProtKB-UniRule"/>
</dbReference>
<dbReference type="GO" id="GO:0016829">
    <property type="term" value="F:lyase activity"/>
    <property type="evidence" value="ECO:0007669"/>
    <property type="project" value="UniProtKB-KW"/>
</dbReference>
<dbReference type="GO" id="GO:0000105">
    <property type="term" value="P:L-histidine biosynthetic process"/>
    <property type="evidence" value="ECO:0007669"/>
    <property type="project" value="UniProtKB-UniRule"/>
</dbReference>
<dbReference type="CDD" id="cd01748">
    <property type="entry name" value="GATase1_IGP_Synthase"/>
    <property type="match status" value="1"/>
</dbReference>
<dbReference type="FunFam" id="3.40.50.880:FF:000009">
    <property type="entry name" value="Imidazole glycerol phosphate synthase subunit HisH"/>
    <property type="match status" value="1"/>
</dbReference>
<dbReference type="Gene3D" id="3.40.50.880">
    <property type="match status" value="1"/>
</dbReference>
<dbReference type="HAMAP" id="MF_00278">
    <property type="entry name" value="HisH"/>
    <property type="match status" value="1"/>
</dbReference>
<dbReference type="InterPro" id="IPR029062">
    <property type="entry name" value="Class_I_gatase-like"/>
</dbReference>
<dbReference type="InterPro" id="IPR017926">
    <property type="entry name" value="GATASE"/>
</dbReference>
<dbReference type="InterPro" id="IPR010139">
    <property type="entry name" value="Imidazole-glycPsynth_HisH"/>
</dbReference>
<dbReference type="NCBIfam" id="TIGR01855">
    <property type="entry name" value="IMP_synth_hisH"/>
    <property type="match status" value="1"/>
</dbReference>
<dbReference type="PANTHER" id="PTHR42701">
    <property type="entry name" value="IMIDAZOLE GLYCEROL PHOSPHATE SYNTHASE SUBUNIT HISH"/>
    <property type="match status" value="1"/>
</dbReference>
<dbReference type="PANTHER" id="PTHR42701:SF1">
    <property type="entry name" value="IMIDAZOLE GLYCEROL PHOSPHATE SYNTHASE SUBUNIT HISH"/>
    <property type="match status" value="1"/>
</dbReference>
<dbReference type="Pfam" id="PF00117">
    <property type="entry name" value="GATase"/>
    <property type="match status" value="1"/>
</dbReference>
<dbReference type="PIRSF" id="PIRSF000495">
    <property type="entry name" value="Amidotransf_hisH"/>
    <property type="match status" value="1"/>
</dbReference>
<dbReference type="SUPFAM" id="SSF52317">
    <property type="entry name" value="Class I glutamine amidotransferase-like"/>
    <property type="match status" value="1"/>
</dbReference>
<dbReference type="PROSITE" id="PS51273">
    <property type="entry name" value="GATASE_TYPE_1"/>
    <property type="match status" value="1"/>
</dbReference>
<protein>
    <recommendedName>
        <fullName evidence="1">Imidazole glycerol phosphate synthase subunit HisH</fullName>
        <ecNumber evidence="1">4.3.2.10</ecNumber>
    </recommendedName>
    <alternativeName>
        <fullName evidence="1">IGP synthase glutaminase subunit</fullName>
        <ecNumber evidence="1">3.5.1.2</ecNumber>
    </alternativeName>
    <alternativeName>
        <fullName evidence="1">IGP synthase subunit HisH</fullName>
    </alternativeName>
    <alternativeName>
        <fullName evidence="1">ImGP synthase subunit HisH</fullName>
        <shortName evidence="1">IGPS subunit HisH</shortName>
    </alternativeName>
</protein>
<keyword id="KW-0028">Amino-acid biosynthesis</keyword>
<keyword id="KW-0963">Cytoplasm</keyword>
<keyword id="KW-0315">Glutamine amidotransferase</keyword>
<keyword id="KW-0368">Histidine biosynthesis</keyword>
<keyword id="KW-0378">Hydrolase</keyword>
<keyword id="KW-0456">Lyase</keyword>
<keyword id="KW-1185">Reference proteome</keyword>
<organism>
    <name type="scientific">Synechococcus elongatus (strain ATCC 33912 / PCC 7942 / FACHB-805)</name>
    <name type="common">Anacystis nidulans R2</name>
    <dbReference type="NCBI Taxonomy" id="1140"/>
    <lineage>
        <taxon>Bacteria</taxon>
        <taxon>Bacillati</taxon>
        <taxon>Cyanobacteriota</taxon>
        <taxon>Cyanophyceae</taxon>
        <taxon>Synechococcales</taxon>
        <taxon>Synechococcaceae</taxon>
        <taxon>Synechococcus</taxon>
    </lineage>
</organism>
<accession>Q31N58</accession>
<gene>
    <name evidence="1" type="primary">hisH</name>
    <name type="ordered locus">Synpcc7942_1481</name>
</gene>
<feature type="chain" id="PRO_1000114793" description="Imidazole glycerol phosphate synthase subunit HisH">
    <location>
        <begin position="1"/>
        <end position="217"/>
    </location>
</feature>
<feature type="domain" description="Glutamine amidotransferase type-1" evidence="1">
    <location>
        <begin position="6"/>
        <end position="214"/>
    </location>
</feature>
<feature type="active site" description="Nucleophile" evidence="1">
    <location>
        <position position="84"/>
    </location>
</feature>
<feature type="active site" evidence="1">
    <location>
        <position position="189"/>
    </location>
</feature>
<feature type="active site" evidence="1">
    <location>
        <position position="191"/>
    </location>
</feature>
<evidence type="ECO:0000255" key="1">
    <source>
        <dbReference type="HAMAP-Rule" id="MF_00278"/>
    </source>
</evidence>
<sequence>MASTPQIAVVDYDMGNLHSACKGLEAAGANPIVTADPATILAADGVLLPGVGAFDPAMDHLRDRQLIEPLHQAATSGKPFLGICLGLQLLFEASEEGQSAGLGILPGRVQRFRSEPGLVIPHMGWNQLQLQQPDCPLWQNLGADPWFYFVHTYYVVPSEPTLTAATVQHGSQPVTAAIARDRLWAVQFHPEKSAKAGLQLLANFVTQVAAAQLQTVA</sequence>
<proteinExistence type="inferred from homology"/>
<comment type="function">
    <text evidence="1">IGPS catalyzes the conversion of PRFAR and glutamine to IGP, AICAR and glutamate. The HisH subunit catalyzes the hydrolysis of glutamine to glutamate and ammonia as part of the synthesis of IGP and AICAR. The resulting ammonia molecule is channeled to the active site of HisF.</text>
</comment>
<comment type="catalytic activity">
    <reaction evidence="1">
        <text>5-[(5-phospho-1-deoxy-D-ribulos-1-ylimino)methylamino]-1-(5-phospho-beta-D-ribosyl)imidazole-4-carboxamide + L-glutamine = D-erythro-1-(imidazol-4-yl)glycerol 3-phosphate + 5-amino-1-(5-phospho-beta-D-ribosyl)imidazole-4-carboxamide + L-glutamate + H(+)</text>
        <dbReference type="Rhea" id="RHEA:24793"/>
        <dbReference type="ChEBI" id="CHEBI:15378"/>
        <dbReference type="ChEBI" id="CHEBI:29985"/>
        <dbReference type="ChEBI" id="CHEBI:58278"/>
        <dbReference type="ChEBI" id="CHEBI:58359"/>
        <dbReference type="ChEBI" id="CHEBI:58475"/>
        <dbReference type="ChEBI" id="CHEBI:58525"/>
        <dbReference type="EC" id="4.3.2.10"/>
    </reaction>
</comment>
<comment type="catalytic activity">
    <reaction evidence="1">
        <text>L-glutamine + H2O = L-glutamate + NH4(+)</text>
        <dbReference type="Rhea" id="RHEA:15889"/>
        <dbReference type="ChEBI" id="CHEBI:15377"/>
        <dbReference type="ChEBI" id="CHEBI:28938"/>
        <dbReference type="ChEBI" id="CHEBI:29985"/>
        <dbReference type="ChEBI" id="CHEBI:58359"/>
        <dbReference type="EC" id="3.5.1.2"/>
    </reaction>
</comment>
<comment type="pathway">
    <text evidence="1">Amino-acid biosynthesis; L-histidine biosynthesis; L-histidine from 5-phospho-alpha-D-ribose 1-diphosphate: step 5/9.</text>
</comment>
<comment type="subunit">
    <text evidence="1">Heterodimer of HisH and HisF.</text>
</comment>
<comment type="subcellular location">
    <subcellularLocation>
        <location evidence="1">Cytoplasm</location>
    </subcellularLocation>
</comment>